<protein>
    <recommendedName>
        <fullName>Putative lipase atg15</fullName>
        <ecNumber>3.1.1.3</ecNumber>
    </recommendedName>
    <alternativeName>
        <fullName>Autophagy-related protein 15</fullName>
    </alternativeName>
</protein>
<proteinExistence type="inferred from homology"/>
<dbReference type="EC" id="3.1.1.3"/>
<dbReference type="EMBL" id="AACD01000101">
    <property type="protein sequence ID" value="EAA57782.1"/>
    <property type="status" value="ALT_INIT"/>
    <property type="molecule type" value="Genomic_DNA"/>
</dbReference>
<dbReference type="EMBL" id="BN001301">
    <property type="protein sequence ID" value="CBF70571.1"/>
    <property type="molecule type" value="Genomic_DNA"/>
</dbReference>
<dbReference type="RefSeq" id="XP_663523.1">
    <property type="nucleotide sequence ID" value="XM_658431.1"/>
</dbReference>
<dbReference type="FunCoup" id="Q5B0L1">
    <property type="interactions" value="50"/>
</dbReference>
<dbReference type="STRING" id="227321.Q5B0L1"/>
<dbReference type="ESTHER" id="emeni-atg15">
    <property type="family name" value="ATG15-related-lipase"/>
</dbReference>
<dbReference type="GlyCosmos" id="Q5B0L1">
    <property type="glycosylation" value="6 sites, No reported glycans"/>
</dbReference>
<dbReference type="EnsemblFungi" id="CBF70571">
    <property type="protein sequence ID" value="CBF70571"/>
    <property type="gene ID" value="ANIA_05919"/>
</dbReference>
<dbReference type="KEGG" id="ani:ANIA_05919"/>
<dbReference type="eggNOG" id="KOG4540">
    <property type="taxonomic scope" value="Eukaryota"/>
</dbReference>
<dbReference type="HOGENOM" id="CLU_028295_0_1_1"/>
<dbReference type="InParanoid" id="Q5B0L1"/>
<dbReference type="OMA" id="CHDCYNW"/>
<dbReference type="OrthoDB" id="58570at2759"/>
<dbReference type="Proteomes" id="UP000000560">
    <property type="component" value="Chromosome I"/>
</dbReference>
<dbReference type="GO" id="GO:0005783">
    <property type="term" value="C:endoplasmic reticulum"/>
    <property type="evidence" value="ECO:0007669"/>
    <property type="project" value="EnsemblFungi"/>
</dbReference>
<dbReference type="GO" id="GO:0016020">
    <property type="term" value="C:membrane"/>
    <property type="evidence" value="ECO:0000318"/>
    <property type="project" value="GO_Central"/>
</dbReference>
<dbReference type="GO" id="GO:0032585">
    <property type="term" value="C:multivesicular body membrane"/>
    <property type="evidence" value="ECO:0007669"/>
    <property type="project" value="UniProtKB-SubCell"/>
</dbReference>
<dbReference type="GO" id="GO:0005775">
    <property type="term" value="C:vacuolar lumen"/>
    <property type="evidence" value="ECO:0000318"/>
    <property type="project" value="GO_Central"/>
</dbReference>
<dbReference type="GO" id="GO:0005774">
    <property type="term" value="C:vacuolar membrane"/>
    <property type="evidence" value="ECO:0007669"/>
    <property type="project" value="EnsemblFungi"/>
</dbReference>
<dbReference type="GO" id="GO:0004620">
    <property type="term" value="F:phospholipase activity"/>
    <property type="evidence" value="ECO:0000318"/>
    <property type="project" value="GO_Central"/>
</dbReference>
<dbReference type="GO" id="GO:0004806">
    <property type="term" value="F:triacylglycerol lipase activity"/>
    <property type="evidence" value="ECO:0007669"/>
    <property type="project" value="UniProtKB-EC"/>
</dbReference>
<dbReference type="GO" id="GO:0034496">
    <property type="term" value="P:multivesicular body membrane disassembly"/>
    <property type="evidence" value="ECO:0000318"/>
    <property type="project" value="GO_Central"/>
</dbReference>
<dbReference type="GO" id="GO:0046461">
    <property type="term" value="P:neutral lipid catabolic process"/>
    <property type="evidence" value="ECO:0000318"/>
    <property type="project" value="GO_Central"/>
</dbReference>
<dbReference type="GO" id="GO:0000425">
    <property type="term" value="P:pexophagy"/>
    <property type="evidence" value="ECO:0007669"/>
    <property type="project" value="EnsemblFungi"/>
</dbReference>
<dbReference type="GO" id="GO:0006660">
    <property type="term" value="P:phosphatidylserine catabolic process"/>
    <property type="evidence" value="ECO:0000318"/>
    <property type="project" value="GO_Central"/>
</dbReference>
<dbReference type="GO" id="GO:0034727">
    <property type="term" value="P:piecemeal microautophagy of the nucleus"/>
    <property type="evidence" value="ECO:0000318"/>
    <property type="project" value="GO_Central"/>
</dbReference>
<dbReference type="GO" id="GO:0006624">
    <property type="term" value="P:vacuolar protein processing"/>
    <property type="evidence" value="ECO:0007669"/>
    <property type="project" value="EnsemblFungi"/>
</dbReference>
<dbReference type="CDD" id="cd00519">
    <property type="entry name" value="Lipase_3"/>
    <property type="match status" value="1"/>
</dbReference>
<dbReference type="FunFam" id="3.40.50.1820:FF:000129">
    <property type="entry name" value="Autophagy related lipase Atg15, putative"/>
    <property type="match status" value="1"/>
</dbReference>
<dbReference type="Gene3D" id="3.40.50.1820">
    <property type="entry name" value="alpha/beta hydrolase"/>
    <property type="match status" value="1"/>
</dbReference>
<dbReference type="InterPro" id="IPR029058">
    <property type="entry name" value="AB_hydrolase_fold"/>
</dbReference>
<dbReference type="InterPro" id="IPR050805">
    <property type="entry name" value="ATG15_Lipase"/>
</dbReference>
<dbReference type="InterPro" id="IPR002921">
    <property type="entry name" value="Fungal_lipase-type"/>
</dbReference>
<dbReference type="PANTHER" id="PTHR47175">
    <property type="entry name" value="LIPASE ATG15-RELATED"/>
    <property type="match status" value="1"/>
</dbReference>
<dbReference type="PANTHER" id="PTHR47175:SF2">
    <property type="entry name" value="LIPASE ATG15-RELATED"/>
    <property type="match status" value="1"/>
</dbReference>
<dbReference type="Pfam" id="PF01764">
    <property type="entry name" value="Lipase_3"/>
    <property type="match status" value="1"/>
</dbReference>
<dbReference type="SUPFAM" id="SSF53474">
    <property type="entry name" value="alpha/beta-Hydrolases"/>
    <property type="match status" value="1"/>
</dbReference>
<dbReference type="PROSITE" id="PS00120">
    <property type="entry name" value="LIPASE_SER"/>
    <property type="match status" value="1"/>
</dbReference>
<organism>
    <name type="scientific">Emericella nidulans (strain FGSC A4 / ATCC 38163 / CBS 112.46 / NRRL 194 / M139)</name>
    <name type="common">Aspergillus nidulans</name>
    <dbReference type="NCBI Taxonomy" id="227321"/>
    <lineage>
        <taxon>Eukaryota</taxon>
        <taxon>Fungi</taxon>
        <taxon>Dikarya</taxon>
        <taxon>Ascomycota</taxon>
        <taxon>Pezizomycotina</taxon>
        <taxon>Eurotiomycetes</taxon>
        <taxon>Eurotiomycetidae</taxon>
        <taxon>Eurotiales</taxon>
        <taxon>Aspergillaceae</taxon>
        <taxon>Aspergillus</taxon>
        <taxon>Aspergillus subgen. Nidulantes</taxon>
    </lineage>
</organism>
<reference key="1">
    <citation type="journal article" date="2005" name="Nature">
        <title>Sequencing of Aspergillus nidulans and comparative analysis with A. fumigatus and A. oryzae.</title>
        <authorList>
            <person name="Galagan J.E."/>
            <person name="Calvo S.E."/>
            <person name="Cuomo C."/>
            <person name="Ma L.-J."/>
            <person name="Wortman J.R."/>
            <person name="Batzoglou S."/>
            <person name="Lee S.-I."/>
            <person name="Bastuerkmen M."/>
            <person name="Spevak C.C."/>
            <person name="Clutterbuck J."/>
            <person name="Kapitonov V."/>
            <person name="Jurka J."/>
            <person name="Scazzocchio C."/>
            <person name="Farman M.L."/>
            <person name="Butler J."/>
            <person name="Purcell S."/>
            <person name="Harris S."/>
            <person name="Braus G.H."/>
            <person name="Draht O."/>
            <person name="Busch S."/>
            <person name="D'Enfert C."/>
            <person name="Bouchier C."/>
            <person name="Goldman G.H."/>
            <person name="Bell-Pedersen D."/>
            <person name="Griffiths-Jones S."/>
            <person name="Doonan J.H."/>
            <person name="Yu J."/>
            <person name="Vienken K."/>
            <person name="Pain A."/>
            <person name="Freitag M."/>
            <person name="Selker E.U."/>
            <person name="Archer D.B."/>
            <person name="Penalva M.A."/>
            <person name="Oakley B.R."/>
            <person name="Momany M."/>
            <person name="Tanaka T."/>
            <person name="Kumagai T."/>
            <person name="Asai K."/>
            <person name="Machida M."/>
            <person name="Nierman W.C."/>
            <person name="Denning D.W."/>
            <person name="Caddick M.X."/>
            <person name="Hynes M."/>
            <person name="Paoletti M."/>
            <person name="Fischer R."/>
            <person name="Miller B.L."/>
            <person name="Dyer P.S."/>
            <person name="Sachs M.S."/>
            <person name="Osmani S.A."/>
            <person name="Birren B.W."/>
        </authorList>
    </citation>
    <scope>NUCLEOTIDE SEQUENCE [LARGE SCALE GENOMIC DNA]</scope>
    <source>
        <strain>FGSC A4 / ATCC 38163 / CBS 112.46 / NRRL 194 / M139</strain>
    </source>
</reference>
<reference key="2">
    <citation type="journal article" date="2009" name="Fungal Genet. Biol.">
        <title>The 2008 update of the Aspergillus nidulans genome annotation: a community effort.</title>
        <authorList>
            <person name="Wortman J.R."/>
            <person name="Gilsenan J.M."/>
            <person name="Joardar V."/>
            <person name="Deegan J."/>
            <person name="Clutterbuck J."/>
            <person name="Andersen M.R."/>
            <person name="Archer D."/>
            <person name="Bencina M."/>
            <person name="Braus G."/>
            <person name="Coutinho P."/>
            <person name="von Dohren H."/>
            <person name="Doonan J."/>
            <person name="Driessen A.J."/>
            <person name="Durek P."/>
            <person name="Espeso E."/>
            <person name="Fekete E."/>
            <person name="Flipphi M."/>
            <person name="Estrada C.G."/>
            <person name="Geysens S."/>
            <person name="Goldman G."/>
            <person name="de Groot P.W."/>
            <person name="Hansen K."/>
            <person name="Harris S.D."/>
            <person name="Heinekamp T."/>
            <person name="Helmstaedt K."/>
            <person name="Henrissat B."/>
            <person name="Hofmann G."/>
            <person name="Homan T."/>
            <person name="Horio T."/>
            <person name="Horiuchi H."/>
            <person name="James S."/>
            <person name="Jones M."/>
            <person name="Karaffa L."/>
            <person name="Karanyi Z."/>
            <person name="Kato M."/>
            <person name="Keller N."/>
            <person name="Kelly D.E."/>
            <person name="Kiel J.A."/>
            <person name="Kim J.M."/>
            <person name="van der Klei I.J."/>
            <person name="Klis F.M."/>
            <person name="Kovalchuk A."/>
            <person name="Krasevec N."/>
            <person name="Kubicek C.P."/>
            <person name="Liu B."/>
            <person name="Maccabe A."/>
            <person name="Meyer V."/>
            <person name="Mirabito P."/>
            <person name="Miskei M."/>
            <person name="Mos M."/>
            <person name="Mullins J."/>
            <person name="Nelson D.R."/>
            <person name="Nielsen J."/>
            <person name="Oakley B.R."/>
            <person name="Osmani S.A."/>
            <person name="Pakula T."/>
            <person name="Paszewski A."/>
            <person name="Paulsen I."/>
            <person name="Pilsyk S."/>
            <person name="Pocsi I."/>
            <person name="Punt P.J."/>
            <person name="Ram A.F."/>
            <person name="Ren Q."/>
            <person name="Robellet X."/>
            <person name="Robson G."/>
            <person name="Seiboth B."/>
            <person name="van Solingen P."/>
            <person name="Specht T."/>
            <person name="Sun J."/>
            <person name="Taheri-Talesh N."/>
            <person name="Takeshita N."/>
            <person name="Ussery D."/>
            <person name="vanKuyk P.A."/>
            <person name="Visser H."/>
            <person name="van de Vondervoort P.J."/>
            <person name="de Vries R.P."/>
            <person name="Walton J."/>
            <person name="Xiang X."/>
            <person name="Xiong Y."/>
            <person name="Zeng A.P."/>
            <person name="Brandt B.W."/>
            <person name="Cornell M.J."/>
            <person name="van den Hondel C.A."/>
            <person name="Visser J."/>
            <person name="Oliver S.G."/>
            <person name="Turner G."/>
        </authorList>
    </citation>
    <scope>GENOME REANNOTATION</scope>
    <source>
        <strain>FGSC A4 / ATCC 38163 / CBS 112.46 / NRRL 194 / M139</strain>
    </source>
</reference>
<comment type="function">
    <text evidence="1">Lipase which is essential for lysis of subvacuolar cytoplasm to vacuole targeted bodies and intravacuolar autophagic bodies. Involved in the lysis of intravacuolar multivesicular body (MVB) vesicles. The intravacuolar membrane disintegration by atg15 is critical to life span extension (By similarity).</text>
</comment>
<comment type="catalytic activity">
    <reaction>
        <text>a triacylglycerol + H2O = a diacylglycerol + a fatty acid + H(+)</text>
        <dbReference type="Rhea" id="RHEA:12044"/>
        <dbReference type="ChEBI" id="CHEBI:15377"/>
        <dbReference type="ChEBI" id="CHEBI:15378"/>
        <dbReference type="ChEBI" id="CHEBI:17855"/>
        <dbReference type="ChEBI" id="CHEBI:18035"/>
        <dbReference type="ChEBI" id="CHEBI:28868"/>
        <dbReference type="EC" id="3.1.1.3"/>
    </reaction>
</comment>
<comment type="subunit">
    <text evidence="1">Binds to both phosphatidylinositol (PI) and phosphatidylinositol 3,5-bisphosphate (PIP2).</text>
</comment>
<comment type="subcellular location">
    <subcellularLocation>
        <location evidence="2">Endosome</location>
        <location evidence="2">Multivesicular body membrane</location>
        <topology evidence="2">Single-pass type II membrane protein</topology>
    </subcellularLocation>
    <subcellularLocation>
        <location evidence="2">Prevacuolar compartment membrane</location>
        <topology evidence="2">Single-pass type II membrane protein</topology>
    </subcellularLocation>
    <text evidence="2">From ER, targeted to vacuolar lumen at the MVB vesicles via the Golgi and the prevacuolar compartment (PVC).</text>
</comment>
<comment type="similarity">
    <text evidence="5">Belongs to the AB hydrolase superfamily. Lipase family.</text>
</comment>
<comment type="sequence caution" evidence="5">
    <conflict type="erroneous initiation">
        <sequence resource="EMBL-CDS" id="EAA57782"/>
    </conflict>
    <text>Truncated N-terminus.</text>
</comment>
<keyword id="KW-0072">Autophagy</keyword>
<keyword id="KW-0967">Endosome</keyword>
<keyword id="KW-0325">Glycoprotein</keyword>
<keyword id="KW-0378">Hydrolase</keyword>
<keyword id="KW-0442">Lipid degradation</keyword>
<keyword id="KW-0443">Lipid metabolism</keyword>
<keyword id="KW-0472">Membrane</keyword>
<keyword id="KW-1185">Reference proteome</keyword>
<keyword id="KW-0735">Signal-anchor</keyword>
<keyword id="KW-0812">Transmembrane</keyword>
<keyword id="KW-1133">Transmembrane helix</keyword>
<gene>
    <name type="primary">atg15</name>
    <name type="ORF">AN5919</name>
</gene>
<feature type="chain" id="PRO_0000090368" description="Putative lipase atg15">
    <location>
        <begin position="1"/>
        <end position="603"/>
    </location>
</feature>
<feature type="topological domain" description="Cytoplasmic" evidence="3">
    <location>
        <begin position="1"/>
        <end position="20"/>
    </location>
</feature>
<feature type="transmembrane region" description="Helical; Signal-anchor for type II membrane protein" evidence="3">
    <location>
        <begin position="21"/>
        <end position="41"/>
    </location>
</feature>
<feature type="topological domain" description="Lumenal" evidence="3">
    <location>
        <begin position="42"/>
        <end position="603"/>
    </location>
</feature>
<feature type="active site" description="Charge relay system" evidence="4">
    <location>
        <position position="321"/>
    </location>
</feature>
<feature type="glycosylation site" description="N-linked (GlcNAc...) asparagine" evidence="3">
    <location>
        <position position="166"/>
    </location>
</feature>
<feature type="glycosylation site" description="N-linked (GlcNAc...) asparagine" evidence="3">
    <location>
        <position position="201"/>
    </location>
</feature>
<feature type="glycosylation site" description="N-linked (GlcNAc...) asparagine" evidence="3">
    <location>
        <position position="223"/>
    </location>
</feature>
<feature type="glycosylation site" description="N-linked (GlcNAc...) asparagine" evidence="3">
    <location>
        <position position="281"/>
    </location>
</feature>
<feature type="glycosylation site" description="N-linked (GlcNAc...) asparagine" evidence="3">
    <location>
        <position position="305"/>
    </location>
</feature>
<feature type="glycosylation site" description="N-linked (GlcNAc...) asparagine" evidence="3">
    <location>
        <position position="467"/>
    </location>
</feature>
<name>ATG15_EMENI</name>
<sequence>MDQPHRRTRKWHLMDLSVSTLLMSLALVLPSCVSAYQPVYFRSQEATPFIPPQVPSADPQSLSGTHEFTLRHIVQRGAYEYPELHRRLDIKPNTQLRTVSEDGIEDNEPAVFNVPFVASSEPVTIERLADRRLSVIEEHLAAARSAGSAVTLSSSQWTKDTLAGPNVTDKKTILTFAKMTANDYIEVPGTEDWQDINGKLNYSTSFGWQNDGLRGHIYADDTNSTIVISLKGTSPALFDGAGTTTNDKVNDNLYFSCCCGQGGSYLWREVCDCQKSAFNANLTCIIEAMNDENRYYRASLDLYSNVTELYPNANVWLTGHSLGGAMASLLGLTFGLPVVTFEAVPEALPAARLGLPTPPGYNPALPQARKFTGAYHFGHTADPVYMGTCNGVSSVCTWGGYAMESACHTGQMCVYDTVADKGWRVAIGTHRIKAVISDVIEVYDDLPQCAPEEECYDCELWKFFRSNGSEITTTSSTTTTSTITTSTRTTTCKTPGWWGCLDDSTTTDPPTTTTTTSSTCKTPGWFGCKDPTSTTATTTTEAPTTTTTCKDPGWFGCRDPTSPTTSTAPQTSTCETPGFFWGCYDTQTAVDHLITPAPILIDL</sequence>
<accession>Q5B0L1</accession>
<accession>C8V3K5</accession>
<evidence type="ECO:0000250" key="1"/>
<evidence type="ECO:0000250" key="2">
    <source>
        <dbReference type="UniProtKB" id="P25641"/>
    </source>
</evidence>
<evidence type="ECO:0000255" key="3"/>
<evidence type="ECO:0000255" key="4">
    <source>
        <dbReference type="PROSITE-ProRule" id="PRU10037"/>
    </source>
</evidence>
<evidence type="ECO:0000305" key="5"/>